<reference key="1">
    <citation type="journal article" date="2001" name="Nature">
        <title>Genome sequence of Yersinia pestis, the causative agent of plague.</title>
        <authorList>
            <person name="Parkhill J."/>
            <person name="Wren B.W."/>
            <person name="Thomson N.R."/>
            <person name="Titball R.W."/>
            <person name="Holden M.T.G."/>
            <person name="Prentice M.B."/>
            <person name="Sebaihia M."/>
            <person name="James K.D."/>
            <person name="Churcher C.M."/>
            <person name="Mungall K.L."/>
            <person name="Baker S."/>
            <person name="Basham D."/>
            <person name="Bentley S.D."/>
            <person name="Brooks K."/>
            <person name="Cerdeno-Tarraga A.-M."/>
            <person name="Chillingworth T."/>
            <person name="Cronin A."/>
            <person name="Davies R.M."/>
            <person name="Davis P."/>
            <person name="Dougan G."/>
            <person name="Feltwell T."/>
            <person name="Hamlin N."/>
            <person name="Holroyd S."/>
            <person name="Jagels K."/>
            <person name="Karlyshev A.V."/>
            <person name="Leather S."/>
            <person name="Moule S."/>
            <person name="Oyston P.C.F."/>
            <person name="Quail M.A."/>
            <person name="Rutherford K.M."/>
            <person name="Simmonds M."/>
            <person name="Skelton J."/>
            <person name="Stevens K."/>
            <person name="Whitehead S."/>
            <person name="Barrell B.G."/>
        </authorList>
    </citation>
    <scope>NUCLEOTIDE SEQUENCE [LARGE SCALE GENOMIC DNA]</scope>
    <source>
        <strain>CO-92 / Biovar Orientalis</strain>
    </source>
</reference>
<reference key="2">
    <citation type="journal article" date="2002" name="J. Bacteriol.">
        <title>Genome sequence of Yersinia pestis KIM.</title>
        <authorList>
            <person name="Deng W."/>
            <person name="Burland V."/>
            <person name="Plunkett G. III"/>
            <person name="Boutin A."/>
            <person name="Mayhew G.F."/>
            <person name="Liss P."/>
            <person name="Perna N.T."/>
            <person name="Rose D.J."/>
            <person name="Mau B."/>
            <person name="Zhou S."/>
            <person name="Schwartz D.C."/>
            <person name="Fetherston J.D."/>
            <person name="Lindler L.E."/>
            <person name="Brubaker R.R."/>
            <person name="Plano G.V."/>
            <person name="Straley S.C."/>
            <person name="McDonough K.A."/>
            <person name="Nilles M.L."/>
            <person name="Matson J.S."/>
            <person name="Blattner F.R."/>
            <person name="Perry R.D."/>
        </authorList>
    </citation>
    <scope>NUCLEOTIDE SEQUENCE [LARGE SCALE GENOMIC DNA]</scope>
    <source>
        <strain>KIM10+ / Biovar Mediaevalis</strain>
    </source>
</reference>
<reference key="3">
    <citation type="journal article" date="2004" name="DNA Res.">
        <title>Complete genome sequence of Yersinia pestis strain 91001, an isolate avirulent to humans.</title>
        <authorList>
            <person name="Song Y."/>
            <person name="Tong Z."/>
            <person name="Wang J."/>
            <person name="Wang L."/>
            <person name="Guo Z."/>
            <person name="Han Y."/>
            <person name="Zhang J."/>
            <person name="Pei D."/>
            <person name="Zhou D."/>
            <person name="Qin H."/>
            <person name="Pang X."/>
            <person name="Han Y."/>
            <person name="Zhai J."/>
            <person name="Li M."/>
            <person name="Cui B."/>
            <person name="Qi Z."/>
            <person name="Jin L."/>
            <person name="Dai R."/>
            <person name="Chen F."/>
            <person name="Li S."/>
            <person name="Ye C."/>
            <person name="Du Z."/>
            <person name="Lin W."/>
            <person name="Wang J."/>
            <person name="Yu J."/>
            <person name="Yang H."/>
            <person name="Wang J."/>
            <person name="Huang P."/>
            <person name="Yang R."/>
        </authorList>
    </citation>
    <scope>NUCLEOTIDE SEQUENCE [LARGE SCALE GENOMIC DNA]</scope>
    <source>
        <strain>91001 / Biovar Mediaevalis</strain>
    </source>
</reference>
<organism>
    <name type="scientific">Yersinia pestis</name>
    <dbReference type="NCBI Taxonomy" id="632"/>
    <lineage>
        <taxon>Bacteria</taxon>
        <taxon>Pseudomonadati</taxon>
        <taxon>Pseudomonadota</taxon>
        <taxon>Gammaproteobacteria</taxon>
        <taxon>Enterobacterales</taxon>
        <taxon>Yersiniaceae</taxon>
        <taxon>Yersinia</taxon>
    </lineage>
</organism>
<comment type="catalytic activity">
    <reaction evidence="1">
        <text>tRNA(Gly) + glycine + ATP = glycyl-tRNA(Gly) + AMP + diphosphate</text>
        <dbReference type="Rhea" id="RHEA:16013"/>
        <dbReference type="Rhea" id="RHEA-COMP:9664"/>
        <dbReference type="Rhea" id="RHEA-COMP:9683"/>
        <dbReference type="ChEBI" id="CHEBI:30616"/>
        <dbReference type="ChEBI" id="CHEBI:33019"/>
        <dbReference type="ChEBI" id="CHEBI:57305"/>
        <dbReference type="ChEBI" id="CHEBI:78442"/>
        <dbReference type="ChEBI" id="CHEBI:78522"/>
        <dbReference type="ChEBI" id="CHEBI:456215"/>
        <dbReference type="EC" id="6.1.1.14"/>
    </reaction>
</comment>
<comment type="subunit">
    <text evidence="1">Tetramer of two alpha and two beta subunits.</text>
</comment>
<comment type="subcellular location">
    <subcellularLocation>
        <location evidence="1">Cytoplasm</location>
    </subcellularLocation>
</comment>
<comment type="similarity">
    <text evidence="1">Belongs to the class-II aminoacyl-tRNA synthetase family.</text>
</comment>
<evidence type="ECO:0000255" key="1">
    <source>
        <dbReference type="HAMAP-Rule" id="MF_00254"/>
    </source>
</evidence>
<keyword id="KW-0030">Aminoacyl-tRNA synthetase</keyword>
<keyword id="KW-0067">ATP-binding</keyword>
<keyword id="KW-0963">Cytoplasm</keyword>
<keyword id="KW-0436">Ligase</keyword>
<keyword id="KW-0547">Nucleotide-binding</keyword>
<keyword id="KW-0648">Protein biosynthesis</keyword>
<keyword id="KW-1185">Reference proteome</keyword>
<proteinExistence type="inferred from homology"/>
<gene>
    <name evidence="1" type="primary">glyQ</name>
    <name type="ordered locus">YPO4072</name>
    <name type="ordered locus">y4090</name>
    <name type="ordered locus">YP_3982</name>
</gene>
<dbReference type="EC" id="6.1.1.14" evidence="1"/>
<dbReference type="EMBL" id="AL590842">
    <property type="protein sequence ID" value="CAL22644.1"/>
    <property type="molecule type" value="Genomic_DNA"/>
</dbReference>
<dbReference type="EMBL" id="AE009952">
    <property type="protein sequence ID" value="AAM87633.1"/>
    <property type="molecule type" value="Genomic_DNA"/>
</dbReference>
<dbReference type="EMBL" id="AE017042">
    <property type="protein sequence ID" value="AAS64122.1"/>
    <property type="molecule type" value="Genomic_DNA"/>
</dbReference>
<dbReference type="PIR" id="AI0494">
    <property type="entry name" value="AI0494"/>
</dbReference>
<dbReference type="RefSeq" id="WP_002209624.1">
    <property type="nucleotide sequence ID" value="NZ_WUCM01000035.1"/>
</dbReference>
<dbReference type="RefSeq" id="YP_002348928.1">
    <property type="nucleotide sequence ID" value="NC_003143.1"/>
</dbReference>
<dbReference type="SMR" id="Q8Z9W6"/>
<dbReference type="STRING" id="214092.YPO4072"/>
<dbReference type="PaxDb" id="214092-YPO4072"/>
<dbReference type="DNASU" id="1149037"/>
<dbReference type="EnsemblBacteria" id="AAS64122">
    <property type="protein sequence ID" value="AAS64122"/>
    <property type="gene ID" value="YP_3982"/>
</dbReference>
<dbReference type="GeneID" id="96663419"/>
<dbReference type="KEGG" id="ype:YPO4072"/>
<dbReference type="KEGG" id="ypk:y4090"/>
<dbReference type="KEGG" id="ypm:YP_3982"/>
<dbReference type="PATRIC" id="fig|214092.21.peg.4614"/>
<dbReference type="eggNOG" id="COG0752">
    <property type="taxonomic scope" value="Bacteria"/>
</dbReference>
<dbReference type="HOGENOM" id="CLU_057066_1_0_6"/>
<dbReference type="OMA" id="SYYQFQV"/>
<dbReference type="OrthoDB" id="9802183at2"/>
<dbReference type="Proteomes" id="UP000000815">
    <property type="component" value="Chromosome"/>
</dbReference>
<dbReference type="Proteomes" id="UP000001019">
    <property type="component" value="Chromosome"/>
</dbReference>
<dbReference type="Proteomes" id="UP000002490">
    <property type="component" value="Chromosome"/>
</dbReference>
<dbReference type="GO" id="GO:0005737">
    <property type="term" value="C:cytoplasm"/>
    <property type="evidence" value="ECO:0007669"/>
    <property type="project" value="UniProtKB-SubCell"/>
</dbReference>
<dbReference type="GO" id="GO:0005524">
    <property type="term" value="F:ATP binding"/>
    <property type="evidence" value="ECO:0007669"/>
    <property type="project" value="UniProtKB-UniRule"/>
</dbReference>
<dbReference type="GO" id="GO:0004820">
    <property type="term" value="F:glycine-tRNA ligase activity"/>
    <property type="evidence" value="ECO:0007669"/>
    <property type="project" value="UniProtKB-UniRule"/>
</dbReference>
<dbReference type="GO" id="GO:0006426">
    <property type="term" value="P:glycyl-tRNA aminoacylation"/>
    <property type="evidence" value="ECO:0007669"/>
    <property type="project" value="UniProtKB-UniRule"/>
</dbReference>
<dbReference type="CDD" id="cd00733">
    <property type="entry name" value="GlyRS_alpha_core"/>
    <property type="match status" value="1"/>
</dbReference>
<dbReference type="FunFam" id="1.20.58.180:FF:000001">
    <property type="entry name" value="Glycine--tRNA ligase alpha subunit"/>
    <property type="match status" value="1"/>
</dbReference>
<dbReference type="FunFam" id="3.30.930.10:FF:000006">
    <property type="entry name" value="Glycine--tRNA ligase alpha subunit"/>
    <property type="match status" value="1"/>
</dbReference>
<dbReference type="Gene3D" id="3.30.930.10">
    <property type="entry name" value="Bira Bifunctional Protein, Domain 2"/>
    <property type="match status" value="1"/>
</dbReference>
<dbReference type="Gene3D" id="1.20.58.180">
    <property type="entry name" value="Class II aaRS and biotin synthetases, domain 2"/>
    <property type="match status" value="1"/>
</dbReference>
<dbReference type="HAMAP" id="MF_00254">
    <property type="entry name" value="Gly_tRNA_synth_alpha"/>
    <property type="match status" value="1"/>
</dbReference>
<dbReference type="InterPro" id="IPR045864">
    <property type="entry name" value="aa-tRNA-synth_II/BPL/LPL"/>
</dbReference>
<dbReference type="InterPro" id="IPR006194">
    <property type="entry name" value="Gly-tRNA-synth_heterodimer"/>
</dbReference>
<dbReference type="InterPro" id="IPR002310">
    <property type="entry name" value="Gly-tRNA_ligase_asu"/>
</dbReference>
<dbReference type="NCBIfam" id="TIGR00388">
    <property type="entry name" value="glyQ"/>
    <property type="match status" value="1"/>
</dbReference>
<dbReference type="NCBIfam" id="NF006827">
    <property type="entry name" value="PRK09348.1"/>
    <property type="match status" value="1"/>
</dbReference>
<dbReference type="PANTHER" id="PTHR30075:SF2">
    <property type="entry name" value="GLYCINE--TRNA LIGASE, CHLOROPLASTIC_MITOCHONDRIAL 2"/>
    <property type="match status" value="1"/>
</dbReference>
<dbReference type="PANTHER" id="PTHR30075">
    <property type="entry name" value="GLYCYL-TRNA SYNTHETASE"/>
    <property type="match status" value="1"/>
</dbReference>
<dbReference type="Pfam" id="PF02091">
    <property type="entry name" value="tRNA-synt_2e"/>
    <property type="match status" value="1"/>
</dbReference>
<dbReference type="PRINTS" id="PR01044">
    <property type="entry name" value="TRNASYNTHGA"/>
</dbReference>
<dbReference type="SUPFAM" id="SSF55681">
    <property type="entry name" value="Class II aaRS and biotin synthetases"/>
    <property type="match status" value="1"/>
</dbReference>
<dbReference type="PROSITE" id="PS50861">
    <property type="entry name" value="AA_TRNA_LIGASE_II_GLYAB"/>
    <property type="match status" value="1"/>
</dbReference>
<protein>
    <recommendedName>
        <fullName evidence="1">Glycine--tRNA ligase alpha subunit</fullName>
        <ecNumber evidence="1">6.1.1.14</ecNumber>
    </recommendedName>
    <alternativeName>
        <fullName evidence="1">Glycyl-tRNA synthetase alpha subunit</fullName>
        <shortName evidence="1">GlyRS</shortName>
    </alternativeName>
</protein>
<accession>Q8Z9W6</accession>
<accession>Q0W9W0</accession>
<feature type="chain" id="PRO_0000072887" description="Glycine--tRNA ligase alpha subunit">
    <location>
        <begin position="1"/>
        <end position="304"/>
    </location>
</feature>
<name>SYGA_YERPE</name>
<sequence>MQKFDTKTFQGLILTLQDYWARQGCTIVQPLDMEVGAGTSHPMTCLRAIGPEPIAAAYVQPSRRPTDGRYGENPNRLQHYYQFQVIIKPSPDNIQELYLGSLKELGLDPTIHDIRFVEDNWENPTLGAWGLGWEVWLNGMEVTQFTYFQQVGGLECKPVTGEITYGLERLAMYIQGVDSVYDLIWCDGPLGTTTYGDIYHQNEVEQSTYNFEYADVDFLFSCFEQYEKEAQSLLALETPLPLPAYERILKAGHTFNLLDARKAISVTERQRYILRIRTLTKAVAEAYYASREALGFPMCKKNQN</sequence>